<keyword id="KW-0119">Carbohydrate metabolism</keyword>
<keyword id="KW-0961">Cell wall biogenesis/degradation</keyword>
<keyword id="KW-0136">Cellulose degradation</keyword>
<keyword id="KW-0325">Glycoprotein</keyword>
<keyword id="KW-0326">Glycosidase</keyword>
<keyword id="KW-0378">Hydrolase</keyword>
<keyword id="KW-0624">Polysaccharide degradation</keyword>
<keyword id="KW-1185">Reference proteome</keyword>
<keyword id="KW-0964">Secreted</keyword>
<keyword id="KW-0732">Signal</keyword>
<dbReference type="EC" id="3.2.1.4"/>
<dbReference type="EMBL" id="AC006434">
    <property type="protein sequence ID" value="AAF87112.1"/>
    <property type="molecule type" value="Genomic_DNA"/>
</dbReference>
<dbReference type="EMBL" id="CP002684">
    <property type="protein sequence ID" value="AEE35745.1"/>
    <property type="molecule type" value="Genomic_DNA"/>
</dbReference>
<dbReference type="EMBL" id="AY039938">
    <property type="protein sequence ID" value="AAK64042.1"/>
    <property type="molecule type" value="mRNA"/>
</dbReference>
<dbReference type="EMBL" id="AY150451">
    <property type="protein sequence ID" value="AAN12892.1"/>
    <property type="molecule type" value="mRNA"/>
</dbReference>
<dbReference type="EMBL" id="AY086475">
    <property type="protein sequence ID" value="AAM63477.1"/>
    <property type="molecule type" value="mRNA"/>
</dbReference>
<dbReference type="PIR" id="E96786">
    <property type="entry name" value="E96786"/>
</dbReference>
<dbReference type="RefSeq" id="NP_177697.1">
    <property type="nucleotide sequence ID" value="NM_106219.3"/>
</dbReference>
<dbReference type="SMR" id="Q8LCP6"/>
<dbReference type="BioGRID" id="29121">
    <property type="interactions" value="1"/>
</dbReference>
<dbReference type="FunCoup" id="Q8LCP6">
    <property type="interactions" value="213"/>
</dbReference>
<dbReference type="STRING" id="3702.Q8LCP6"/>
<dbReference type="CAZy" id="GH9">
    <property type="family name" value="Glycoside Hydrolase Family 9"/>
</dbReference>
<dbReference type="GlyGen" id="Q8LCP6">
    <property type="glycosylation" value="3 sites"/>
</dbReference>
<dbReference type="SwissPalm" id="Q8LCP6"/>
<dbReference type="PaxDb" id="3702-AT1G75680.1"/>
<dbReference type="ProteomicsDB" id="230116"/>
<dbReference type="EnsemblPlants" id="AT1G75680.1">
    <property type="protein sequence ID" value="AT1G75680.1"/>
    <property type="gene ID" value="AT1G75680"/>
</dbReference>
<dbReference type="GeneID" id="843902"/>
<dbReference type="Gramene" id="AT1G75680.1">
    <property type="protein sequence ID" value="AT1G75680.1"/>
    <property type="gene ID" value="AT1G75680"/>
</dbReference>
<dbReference type="KEGG" id="ath:AT1G75680"/>
<dbReference type="Araport" id="AT1G75680"/>
<dbReference type="TAIR" id="AT1G75680">
    <property type="gene designation" value="GH9B7"/>
</dbReference>
<dbReference type="eggNOG" id="ENOG502QRF6">
    <property type="taxonomic scope" value="Eukaryota"/>
</dbReference>
<dbReference type="HOGENOM" id="CLU_008926_1_4_1"/>
<dbReference type="InParanoid" id="Q8LCP6"/>
<dbReference type="OMA" id="WCGWFIA"/>
<dbReference type="PhylomeDB" id="Q8LCP6"/>
<dbReference type="BioCyc" id="ARA:AT1G75680-MONOMER"/>
<dbReference type="PRO" id="PR:Q8LCP6"/>
<dbReference type="Proteomes" id="UP000006548">
    <property type="component" value="Chromosome 1"/>
</dbReference>
<dbReference type="ExpressionAtlas" id="Q8LCP6">
    <property type="expression patterns" value="baseline and differential"/>
</dbReference>
<dbReference type="GO" id="GO:0005576">
    <property type="term" value="C:extracellular region"/>
    <property type="evidence" value="ECO:0007669"/>
    <property type="project" value="UniProtKB-SubCell"/>
</dbReference>
<dbReference type="GO" id="GO:0005739">
    <property type="term" value="C:mitochondrion"/>
    <property type="evidence" value="ECO:0007005"/>
    <property type="project" value="TAIR"/>
</dbReference>
<dbReference type="GO" id="GO:0005886">
    <property type="term" value="C:plasma membrane"/>
    <property type="evidence" value="ECO:0007005"/>
    <property type="project" value="TAIR"/>
</dbReference>
<dbReference type="GO" id="GO:0008810">
    <property type="term" value="F:cellulase activity"/>
    <property type="evidence" value="ECO:0007669"/>
    <property type="project" value="UniProtKB-EC"/>
</dbReference>
<dbReference type="GO" id="GO:0071555">
    <property type="term" value="P:cell wall organization"/>
    <property type="evidence" value="ECO:0007669"/>
    <property type="project" value="UniProtKB-KW"/>
</dbReference>
<dbReference type="GO" id="GO:0030245">
    <property type="term" value="P:cellulose catabolic process"/>
    <property type="evidence" value="ECO:0007669"/>
    <property type="project" value="UniProtKB-KW"/>
</dbReference>
<dbReference type="FunFam" id="1.50.10.10:FF:000020">
    <property type="entry name" value="Endoglucanase"/>
    <property type="match status" value="1"/>
</dbReference>
<dbReference type="Gene3D" id="1.50.10.10">
    <property type="match status" value="1"/>
</dbReference>
<dbReference type="InterPro" id="IPR008928">
    <property type="entry name" value="6-hairpin_glycosidase_sf"/>
</dbReference>
<dbReference type="InterPro" id="IPR012341">
    <property type="entry name" value="6hp_glycosidase-like_sf"/>
</dbReference>
<dbReference type="InterPro" id="IPR001701">
    <property type="entry name" value="Glyco_hydro_9"/>
</dbReference>
<dbReference type="InterPro" id="IPR018221">
    <property type="entry name" value="Glyco_hydro_9_His_AS"/>
</dbReference>
<dbReference type="PANTHER" id="PTHR22298">
    <property type="entry name" value="ENDO-1,4-BETA-GLUCANASE"/>
    <property type="match status" value="1"/>
</dbReference>
<dbReference type="Pfam" id="PF00759">
    <property type="entry name" value="Glyco_hydro_9"/>
    <property type="match status" value="1"/>
</dbReference>
<dbReference type="SUPFAM" id="SSF48208">
    <property type="entry name" value="Six-hairpin glycosidases"/>
    <property type="match status" value="1"/>
</dbReference>
<dbReference type="PROSITE" id="PS60032">
    <property type="entry name" value="GH9_1"/>
    <property type="match status" value="1"/>
</dbReference>
<dbReference type="PROSITE" id="PS00592">
    <property type="entry name" value="GH9_2"/>
    <property type="match status" value="1"/>
</dbReference>
<name>GUN10_ARATH</name>
<reference key="1">
    <citation type="journal article" date="2000" name="Nature">
        <title>Sequence and analysis of chromosome 1 of the plant Arabidopsis thaliana.</title>
        <authorList>
            <person name="Theologis A."/>
            <person name="Ecker J.R."/>
            <person name="Palm C.J."/>
            <person name="Federspiel N.A."/>
            <person name="Kaul S."/>
            <person name="White O."/>
            <person name="Alonso J."/>
            <person name="Altafi H."/>
            <person name="Araujo R."/>
            <person name="Bowman C.L."/>
            <person name="Brooks S.Y."/>
            <person name="Buehler E."/>
            <person name="Chan A."/>
            <person name="Chao Q."/>
            <person name="Chen H."/>
            <person name="Cheuk R.F."/>
            <person name="Chin C.W."/>
            <person name="Chung M.K."/>
            <person name="Conn L."/>
            <person name="Conway A.B."/>
            <person name="Conway A.R."/>
            <person name="Creasy T.H."/>
            <person name="Dewar K."/>
            <person name="Dunn P."/>
            <person name="Etgu P."/>
            <person name="Feldblyum T.V."/>
            <person name="Feng J.-D."/>
            <person name="Fong B."/>
            <person name="Fujii C.Y."/>
            <person name="Gill J.E."/>
            <person name="Goldsmith A.D."/>
            <person name="Haas B."/>
            <person name="Hansen N.F."/>
            <person name="Hughes B."/>
            <person name="Huizar L."/>
            <person name="Hunter J.L."/>
            <person name="Jenkins J."/>
            <person name="Johnson-Hopson C."/>
            <person name="Khan S."/>
            <person name="Khaykin E."/>
            <person name="Kim C.J."/>
            <person name="Koo H.L."/>
            <person name="Kremenetskaia I."/>
            <person name="Kurtz D.B."/>
            <person name="Kwan A."/>
            <person name="Lam B."/>
            <person name="Langin-Hooper S."/>
            <person name="Lee A."/>
            <person name="Lee J.M."/>
            <person name="Lenz C.A."/>
            <person name="Li J.H."/>
            <person name="Li Y.-P."/>
            <person name="Lin X."/>
            <person name="Liu S.X."/>
            <person name="Liu Z.A."/>
            <person name="Luros J.S."/>
            <person name="Maiti R."/>
            <person name="Marziali A."/>
            <person name="Militscher J."/>
            <person name="Miranda M."/>
            <person name="Nguyen M."/>
            <person name="Nierman W.C."/>
            <person name="Osborne B.I."/>
            <person name="Pai G."/>
            <person name="Peterson J."/>
            <person name="Pham P.K."/>
            <person name="Rizzo M."/>
            <person name="Rooney T."/>
            <person name="Rowley D."/>
            <person name="Sakano H."/>
            <person name="Salzberg S.L."/>
            <person name="Schwartz J.R."/>
            <person name="Shinn P."/>
            <person name="Southwick A.M."/>
            <person name="Sun H."/>
            <person name="Tallon L.J."/>
            <person name="Tambunga G."/>
            <person name="Toriumi M.J."/>
            <person name="Town C.D."/>
            <person name="Utterback T."/>
            <person name="Van Aken S."/>
            <person name="Vaysberg M."/>
            <person name="Vysotskaia V.S."/>
            <person name="Walker M."/>
            <person name="Wu D."/>
            <person name="Yu G."/>
            <person name="Fraser C.M."/>
            <person name="Venter J.C."/>
            <person name="Davis R.W."/>
        </authorList>
    </citation>
    <scope>NUCLEOTIDE SEQUENCE [LARGE SCALE GENOMIC DNA]</scope>
    <source>
        <strain>cv. Columbia</strain>
    </source>
</reference>
<reference key="2">
    <citation type="journal article" date="2017" name="Plant J.">
        <title>Araport11: a complete reannotation of the Arabidopsis thaliana reference genome.</title>
        <authorList>
            <person name="Cheng C.Y."/>
            <person name="Krishnakumar V."/>
            <person name="Chan A.P."/>
            <person name="Thibaud-Nissen F."/>
            <person name="Schobel S."/>
            <person name="Town C.D."/>
        </authorList>
    </citation>
    <scope>GENOME REANNOTATION</scope>
    <source>
        <strain>cv. Columbia</strain>
    </source>
</reference>
<reference key="3">
    <citation type="journal article" date="2003" name="Science">
        <title>Empirical analysis of transcriptional activity in the Arabidopsis genome.</title>
        <authorList>
            <person name="Yamada K."/>
            <person name="Lim J."/>
            <person name="Dale J.M."/>
            <person name="Chen H."/>
            <person name="Shinn P."/>
            <person name="Palm C.J."/>
            <person name="Southwick A.M."/>
            <person name="Wu H.C."/>
            <person name="Kim C.J."/>
            <person name="Nguyen M."/>
            <person name="Pham P.K."/>
            <person name="Cheuk R.F."/>
            <person name="Karlin-Newmann G."/>
            <person name="Liu S.X."/>
            <person name="Lam B."/>
            <person name="Sakano H."/>
            <person name="Wu T."/>
            <person name="Yu G."/>
            <person name="Miranda M."/>
            <person name="Quach H.L."/>
            <person name="Tripp M."/>
            <person name="Chang C.H."/>
            <person name="Lee J.M."/>
            <person name="Toriumi M.J."/>
            <person name="Chan M.M."/>
            <person name="Tang C.C."/>
            <person name="Onodera C.S."/>
            <person name="Deng J.M."/>
            <person name="Akiyama K."/>
            <person name="Ansari Y."/>
            <person name="Arakawa T."/>
            <person name="Banh J."/>
            <person name="Banno F."/>
            <person name="Bowser L."/>
            <person name="Brooks S.Y."/>
            <person name="Carninci P."/>
            <person name="Chao Q."/>
            <person name="Choy N."/>
            <person name="Enju A."/>
            <person name="Goldsmith A.D."/>
            <person name="Gurjal M."/>
            <person name="Hansen N.F."/>
            <person name="Hayashizaki Y."/>
            <person name="Johnson-Hopson C."/>
            <person name="Hsuan V.W."/>
            <person name="Iida K."/>
            <person name="Karnes M."/>
            <person name="Khan S."/>
            <person name="Koesema E."/>
            <person name="Ishida J."/>
            <person name="Jiang P.X."/>
            <person name="Jones T."/>
            <person name="Kawai J."/>
            <person name="Kamiya A."/>
            <person name="Meyers C."/>
            <person name="Nakajima M."/>
            <person name="Narusaka M."/>
            <person name="Seki M."/>
            <person name="Sakurai T."/>
            <person name="Satou M."/>
            <person name="Tamse R."/>
            <person name="Vaysberg M."/>
            <person name="Wallender E.K."/>
            <person name="Wong C."/>
            <person name="Yamamura Y."/>
            <person name="Yuan S."/>
            <person name="Shinozaki K."/>
            <person name="Davis R.W."/>
            <person name="Theologis A."/>
            <person name="Ecker J.R."/>
        </authorList>
    </citation>
    <scope>NUCLEOTIDE SEQUENCE [LARGE SCALE MRNA]</scope>
    <source>
        <strain>cv. Columbia</strain>
    </source>
</reference>
<reference key="4">
    <citation type="submission" date="2002-03" db="EMBL/GenBank/DDBJ databases">
        <title>Full-length cDNA from Arabidopsis thaliana.</title>
        <authorList>
            <person name="Brover V.V."/>
            <person name="Troukhan M.E."/>
            <person name="Alexandrov N.A."/>
            <person name="Lu Y.-P."/>
            <person name="Flavell R.B."/>
            <person name="Feldmann K.A."/>
        </authorList>
    </citation>
    <scope>NUCLEOTIDE SEQUENCE [LARGE SCALE MRNA]</scope>
</reference>
<reference key="5">
    <citation type="journal article" date="2004" name="J. Mol. Evol.">
        <title>Phylogenetic analysis of the plant endo-beta-1,4-glucanase gene family.</title>
        <authorList>
            <person name="Libertini E."/>
            <person name="Li Y."/>
            <person name="McQueen-Mason S.J."/>
        </authorList>
    </citation>
    <scope>GENE FAMILY</scope>
</reference>
<protein>
    <recommendedName>
        <fullName>Endoglucanase 10</fullName>
        <ecNumber>3.2.1.4</ecNumber>
    </recommendedName>
    <alternativeName>
        <fullName>Endo-1,4-beta glucanase 10</fullName>
    </alternativeName>
</protein>
<evidence type="ECO:0000250" key="1"/>
<evidence type="ECO:0000255" key="2"/>
<evidence type="ECO:0000255" key="3">
    <source>
        <dbReference type="PROSITE-ProRule" id="PRU10059"/>
    </source>
</evidence>
<evidence type="ECO:0000255" key="4">
    <source>
        <dbReference type="PROSITE-ProRule" id="PRU10140"/>
    </source>
</evidence>
<evidence type="ECO:0000305" key="5"/>
<organism>
    <name type="scientific">Arabidopsis thaliana</name>
    <name type="common">Mouse-ear cress</name>
    <dbReference type="NCBI Taxonomy" id="3702"/>
    <lineage>
        <taxon>Eukaryota</taxon>
        <taxon>Viridiplantae</taxon>
        <taxon>Streptophyta</taxon>
        <taxon>Embryophyta</taxon>
        <taxon>Tracheophyta</taxon>
        <taxon>Spermatophyta</taxon>
        <taxon>Magnoliopsida</taxon>
        <taxon>eudicotyledons</taxon>
        <taxon>Gunneridae</taxon>
        <taxon>Pentapetalae</taxon>
        <taxon>rosids</taxon>
        <taxon>malvids</taxon>
        <taxon>Brassicales</taxon>
        <taxon>Brassicaceae</taxon>
        <taxon>Camelineae</taxon>
        <taxon>Arabidopsis</taxon>
    </lineage>
</organism>
<feature type="signal peptide" evidence="2">
    <location>
        <begin position="1"/>
        <end position="26"/>
    </location>
</feature>
<feature type="chain" id="PRO_0000249262" description="Endoglucanase 10">
    <location>
        <begin position="27"/>
        <end position="525"/>
    </location>
</feature>
<feature type="active site" description="Nucleophile" evidence="4">
    <location>
        <position position="109"/>
    </location>
</feature>
<feature type="active site" evidence="3">
    <location>
        <position position="442"/>
    </location>
</feature>
<feature type="active site" evidence="3">
    <location>
        <position position="489"/>
    </location>
</feature>
<feature type="active site" evidence="3">
    <location>
        <position position="498"/>
    </location>
</feature>
<feature type="glycosylation site" description="N-linked (GlcNAc...) asparagine" evidence="2">
    <location>
        <position position="259"/>
    </location>
</feature>
<feature type="glycosylation site" description="N-linked (GlcNAc...) asparagine" evidence="2">
    <location>
        <position position="464"/>
    </location>
</feature>
<feature type="glycosylation site" description="N-linked (GlcNAc...) asparagine" evidence="2">
    <location>
        <position position="484"/>
    </location>
</feature>
<feature type="sequence conflict" description="In Ref. 4; AAM63477." evidence="5" ref="4">
    <original>G</original>
    <variation>C</variation>
    <location>
        <position position="45"/>
    </location>
</feature>
<feature type="sequence conflict" description="In Ref. 4; AAM63477." evidence="5" ref="4">
    <original>N</original>
    <variation>D</variation>
    <location>
        <position position="238"/>
    </location>
</feature>
<accession>Q8LCP6</accession>
<accession>Q9LR07</accession>
<sequence length="525" mass="57868">MEEKSKSRGWCGWFIAIIVLASVILAVVYTVKLRTKKSGDDDGGGPVPGPPGAIDKKYADALKLALQFFDIQKSGKLENNKIPWRGDSGLKDGSEDNLDLSKGLYDAGDHIKFGFPMAFTATVLSWSILEYGDQMNAVNQLDPAKDSLRWITDYLIKAHPSDNVLYIQVGDPKVDHPCWERPEDMKEKRPLTKIDVDTPGTEVAAETAAAMASASLVFKDSDPTYSATLLKHAKQLFNFADTKRGSYSVNIPEVQKFYNSTGYGDELLWAASWLYHATEDKTYLDYVSNHGKEFASFGNPTWFSWDNKLAGTQVLLSRLLFFKKDLSGSKGLGNYRNTAKAVMCGLLPKSPTSTASRTNGGLIWVSEWNSMQQSVSSAFLASLFSDYMLTSRIHKISCDGKIFKATELRDFAKSQADYMLGKNPLGTSFVVGYGDKYPQFVHHRGASIPADATTGCLDGFKWFNSTKPNPNIAYGALVGGPFFNETFTDSRENPMQNEPTTYNNALLVGLLSSLVTTSSTLQSLK</sequence>
<comment type="catalytic activity">
    <reaction>
        <text>Endohydrolysis of (1-&gt;4)-beta-D-glucosidic linkages in cellulose, lichenin and cereal beta-D-glucans.</text>
        <dbReference type="EC" id="3.2.1.4"/>
    </reaction>
</comment>
<comment type="subcellular location">
    <subcellularLocation>
        <location evidence="1">Secreted</location>
    </subcellularLocation>
</comment>
<comment type="similarity">
    <text evidence="4 5">Belongs to the glycosyl hydrolase 9 (cellulase E) family.</text>
</comment>
<gene>
    <name type="ordered locus">At1g75680</name>
    <name type="ORF">F10A5.13</name>
</gene>
<proteinExistence type="evidence at transcript level"/>